<keyword id="KW-0186">Copper</keyword>
<keyword id="KW-0249">Electron transport</keyword>
<keyword id="KW-0460">Magnesium</keyword>
<keyword id="KW-0472">Membrane</keyword>
<keyword id="KW-0479">Metal-binding</keyword>
<keyword id="KW-0496">Mitochondrion</keyword>
<keyword id="KW-0999">Mitochondrion inner membrane</keyword>
<keyword id="KW-0679">Respiratory chain</keyword>
<keyword id="KW-1278">Translocase</keyword>
<keyword id="KW-0812">Transmembrane</keyword>
<keyword id="KW-1133">Transmembrane helix</keyword>
<keyword id="KW-0813">Transport</keyword>
<accession>P43373</accession>
<accession>Q85Q97</accession>
<reference key="1">
    <citation type="journal article" date="1994" name="J. Mol. Evol.">
        <title>The structure of the small mitochondrial DNA of Kluyveromyces thermotolerans is likely to reflect the ancestral gene order in fungi.</title>
        <authorList>
            <person name="Clark-Walker G.D."/>
            <person name="Weiller G.F."/>
        </authorList>
    </citation>
    <scope>NUCLEOTIDE SEQUENCE [GENOMIC DNA]</scope>
    <source>
        <strain>ATCC 2001 / BCRC 20586 / JCM 3761 / NBRC 0622 / NRRL Y-65 / CBS 138</strain>
    </source>
</reference>
<reference key="2">
    <citation type="journal article" date="2003" name="FEBS Lett.">
        <title>The complete mitochondrial genome sequence of the pathogenic yeast Candida (Torulopsis) glabrata.</title>
        <authorList>
            <person name="Koszul R."/>
            <person name="Malpertuy A."/>
            <person name="Frangeul L."/>
            <person name="Bouchier C."/>
            <person name="Wincker P."/>
            <person name="Thierry A."/>
            <person name="Duthoy S."/>
            <person name="Ferris S."/>
            <person name="Hennequin C."/>
            <person name="Dujon B."/>
        </authorList>
    </citation>
    <scope>NUCLEOTIDE SEQUENCE [LARGE SCALE GENOMIC DNA]</scope>
    <source>
        <strain>ATCC 2001 / BCRC 20586 / JCM 3761 / NBRC 0622 / NRRL Y-65 / CBS 138</strain>
    </source>
</reference>
<sequence length="251" mass="28602">MLNLLNTLFLNVISNDVPTPYGIYFQDSATPNQEGILELHDNIMFYLFIILGLVSWMLFTIVKTYSKNPMAYKYIKHGQTIEIIWTMFPAVILLIIAFPSFILLYLCDEVISPAMTIKAIGYQWYWKYEYSDFINDNGETIEFESYVIPDDLLEEGQLRLLDTDTSVVVPVDTHIRFVVTGADVIHDFAIPSLGIKVDANPGRLNQVSALIQREGVFYGQCSELCGVNHAAMPIKIEAVSLPKFLEWLNEQ</sequence>
<comment type="function">
    <text evidence="1">Component of the cytochrome c oxidase, the last enzyme in the mitochondrial electron transport chain which drives oxidative phosphorylation. The respiratory chain contains 3 multisubunit complexes succinate dehydrogenase (complex II, CII), ubiquinol-cytochrome c oxidoreductase (cytochrome b-c1 complex, complex III, CIII) and cytochrome c oxidase (complex IV, CIV), that cooperate to transfer electrons derived from NADH and succinate to molecular oxygen, creating an electrochemical gradient over the inner membrane that drives transmembrane transport and the ATP synthase. Cytochrome c oxidase is the component of the respiratory chain that catalyzes the reduction of oxygen to water. Electrons originating from reduced cytochrome c in the intermembrane space (IMS) are transferred via the dinuclear copper A center (CU(A)) of subunit 2 and heme A of subunit 1 to the active site in subunit 1, a binuclear center (BNC) formed by heme A3 and copper B (CU(B)). The BNC reduces molecular oxygen to 2 water molecules using 4 electrons from cytochrome c in the IMS and 4 protons from the mitochondrial matrix.</text>
</comment>
<comment type="catalytic activity">
    <reaction evidence="1">
        <text>4 Fe(II)-[cytochrome c] + O2 + 8 H(+)(in) = 4 Fe(III)-[cytochrome c] + 2 H2O + 4 H(+)(out)</text>
        <dbReference type="Rhea" id="RHEA:11436"/>
        <dbReference type="Rhea" id="RHEA-COMP:10350"/>
        <dbReference type="Rhea" id="RHEA-COMP:14399"/>
        <dbReference type="ChEBI" id="CHEBI:15377"/>
        <dbReference type="ChEBI" id="CHEBI:15378"/>
        <dbReference type="ChEBI" id="CHEBI:15379"/>
        <dbReference type="ChEBI" id="CHEBI:29033"/>
        <dbReference type="ChEBI" id="CHEBI:29034"/>
        <dbReference type="EC" id="7.1.1.9"/>
    </reaction>
    <physiologicalReaction direction="left-to-right" evidence="1">
        <dbReference type="Rhea" id="RHEA:11437"/>
    </physiologicalReaction>
</comment>
<comment type="cofactor">
    <cofactor evidence="1">
        <name>Cu cation</name>
        <dbReference type="ChEBI" id="CHEBI:23378"/>
    </cofactor>
    <text evidence="1">Binds a dinuclear copper A center per subunit.</text>
</comment>
<comment type="subunit">
    <text evidence="1">Component of the cytochrome c oxidase (complex IV, CIV), a multisubunit enzyme composed of a catalytic core of 3 subunits and several supernumerary subunits. The complex exists as a monomer or a dimer and forms supercomplexes (SCs) in the inner mitochondrial membrane with ubiquinol-cytochrome c oxidoreductase (cytochrome b-c1 complex, complex III, CIII).</text>
</comment>
<comment type="subcellular location">
    <subcellularLocation>
        <location evidence="1">Mitochondrion inner membrane</location>
        <topology evidence="1">Multi-pass membrane protein</topology>
    </subcellularLocation>
</comment>
<comment type="similarity">
    <text evidence="3">Belongs to the cytochrome c oxidase subunit 2 family.</text>
</comment>
<comment type="sequence caution" evidence="3">
    <conflict type="frameshift">
        <sequence resource="EMBL-CDS" id="CAD54426"/>
    </conflict>
</comment>
<dbReference type="EC" id="7.1.1.9"/>
<dbReference type="EMBL" id="X69430">
    <property type="protein sequence ID" value="CAA49205.1"/>
    <property type="molecule type" value="Genomic_DNA"/>
</dbReference>
<dbReference type="EMBL" id="AJ511533">
    <property type="protein sequence ID" value="CAD54426.1"/>
    <property type="status" value="ALT_FRAME"/>
    <property type="molecule type" value="Genomic_DNA"/>
</dbReference>
<dbReference type="PIR" id="S45438">
    <property type="entry name" value="S45438"/>
</dbReference>
<dbReference type="RefSeq" id="NP_818785.1">
    <property type="nucleotide sequence ID" value="NC_004691.1"/>
</dbReference>
<dbReference type="SMR" id="P43373"/>
<dbReference type="FunCoup" id="P43373">
    <property type="interactions" value="237"/>
</dbReference>
<dbReference type="STRING" id="284593.P43373"/>
<dbReference type="GeneID" id="807024"/>
<dbReference type="KEGG" id="cgr:807024"/>
<dbReference type="InParanoid" id="P43373"/>
<dbReference type="GO" id="GO:0005743">
    <property type="term" value="C:mitochondrial inner membrane"/>
    <property type="evidence" value="ECO:0007669"/>
    <property type="project" value="UniProtKB-SubCell"/>
</dbReference>
<dbReference type="GO" id="GO:0005507">
    <property type="term" value="F:copper ion binding"/>
    <property type="evidence" value="ECO:0007669"/>
    <property type="project" value="InterPro"/>
</dbReference>
<dbReference type="GO" id="GO:0004129">
    <property type="term" value="F:cytochrome-c oxidase activity"/>
    <property type="evidence" value="ECO:0007669"/>
    <property type="project" value="UniProtKB-EC"/>
</dbReference>
<dbReference type="GO" id="GO:0042773">
    <property type="term" value="P:ATP synthesis coupled electron transport"/>
    <property type="evidence" value="ECO:0007669"/>
    <property type="project" value="TreeGrafter"/>
</dbReference>
<dbReference type="CDD" id="cd13912">
    <property type="entry name" value="CcO_II_C"/>
    <property type="match status" value="1"/>
</dbReference>
<dbReference type="FunFam" id="1.10.287.90:FF:000004">
    <property type="entry name" value="Cytochrome c oxidase subunit 2"/>
    <property type="match status" value="1"/>
</dbReference>
<dbReference type="FunFam" id="2.60.40.420:FF:000001">
    <property type="entry name" value="Cytochrome c oxidase subunit 2"/>
    <property type="match status" value="1"/>
</dbReference>
<dbReference type="Gene3D" id="1.10.287.90">
    <property type="match status" value="1"/>
</dbReference>
<dbReference type="Gene3D" id="2.60.40.420">
    <property type="entry name" value="Cupredoxins - blue copper proteins"/>
    <property type="match status" value="1"/>
</dbReference>
<dbReference type="InterPro" id="IPR045187">
    <property type="entry name" value="CcO_II"/>
</dbReference>
<dbReference type="InterPro" id="IPR002429">
    <property type="entry name" value="CcO_II-like_C"/>
</dbReference>
<dbReference type="InterPro" id="IPR034210">
    <property type="entry name" value="CcO_II_C"/>
</dbReference>
<dbReference type="InterPro" id="IPR001505">
    <property type="entry name" value="Copper_CuA"/>
</dbReference>
<dbReference type="InterPro" id="IPR008972">
    <property type="entry name" value="Cupredoxin"/>
</dbReference>
<dbReference type="InterPro" id="IPR014222">
    <property type="entry name" value="Cyt_c_oxidase_su2"/>
</dbReference>
<dbReference type="InterPro" id="IPR011759">
    <property type="entry name" value="Cyt_c_oxidase_su2_TM_dom"/>
</dbReference>
<dbReference type="InterPro" id="IPR036257">
    <property type="entry name" value="Cyt_c_oxidase_su2_TM_sf"/>
</dbReference>
<dbReference type="NCBIfam" id="TIGR02866">
    <property type="entry name" value="CoxB"/>
    <property type="match status" value="1"/>
</dbReference>
<dbReference type="PANTHER" id="PTHR22888:SF9">
    <property type="entry name" value="CYTOCHROME C OXIDASE SUBUNIT 2"/>
    <property type="match status" value="1"/>
</dbReference>
<dbReference type="PANTHER" id="PTHR22888">
    <property type="entry name" value="CYTOCHROME C OXIDASE, SUBUNIT II"/>
    <property type="match status" value="1"/>
</dbReference>
<dbReference type="Pfam" id="PF00116">
    <property type="entry name" value="COX2"/>
    <property type="match status" value="1"/>
</dbReference>
<dbReference type="Pfam" id="PF02790">
    <property type="entry name" value="COX2_TM"/>
    <property type="match status" value="1"/>
</dbReference>
<dbReference type="PRINTS" id="PR01166">
    <property type="entry name" value="CYCOXIDASEII"/>
</dbReference>
<dbReference type="SUPFAM" id="SSF49503">
    <property type="entry name" value="Cupredoxins"/>
    <property type="match status" value="1"/>
</dbReference>
<dbReference type="SUPFAM" id="SSF81464">
    <property type="entry name" value="Cytochrome c oxidase subunit II-like, transmembrane region"/>
    <property type="match status" value="1"/>
</dbReference>
<dbReference type="PROSITE" id="PS00078">
    <property type="entry name" value="COX2"/>
    <property type="match status" value="1"/>
</dbReference>
<dbReference type="PROSITE" id="PS50857">
    <property type="entry name" value="COX2_CUA"/>
    <property type="match status" value="1"/>
</dbReference>
<dbReference type="PROSITE" id="PS50999">
    <property type="entry name" value="COX2_TM"/>
    <property type="match status" value="1"/>
</dbReference>
<protein>
    <recommendedName>
        <fullName>Cytochrome c oxidase subunit 2</fullName>
        <ecNumber>7.1.1.9</ecNumber>
    </recommendedName>
    <alternativeName>
        <fullName>Cytochrome c oxidase polypeptide II</fullName>
    </alternativeName>
</protein>
<geneLocation type="mitochondrion"/>
<feature type="chain" id="PRO_0000183535" description="Cytochrome c oxidase subunit 2">
    <location>
        <begin position="1"/>
        <end position="251"/>
    </location>
</feature>
<feature type="transmembrane region" description="Helical" evidence="2">
    <location>
        <begin position="42"/>
        <end position="62"/>
    </location>
</feature>
<feature type="transmembrane region" description="Helical" evidence="2">
    <location>
        <begin position="83"/>
        <end position="103"/>
    </location>
</feature>
<feature type="binding site" evidence="1">
    <location>
        <position position="186"/>
    </location>
    <ligand>
        <name>Cu cation</name>
        <dbReference type="ChEBI" id="CHEBI:23378"/>
        <label>A1</label>
    </ligand>
</feature>
<feature type="binding site" evidence="1">
    <location>
        <position position="221"/>
    </location>
    <ligand>
        <name>Cu cation</name>
        <dbReference type="ChEBI" id="CHEBI:23378"/>
        <label>A1</label>
    </ligand>
</feature>
<feature type="binding site" evidence="1">
    <location>
        <position position="221"/>
    </location>
    <ligand>
        <name>Cu cation</name>
        <dbReference type="ChEBI" id="CHEBI:23378"/>
        <label>A2</label>
    </ligand>
</feature>
<feature type="binding site" evidence="1">
    <location>
        <position position="223"/>
    </location>
    <ligand>
        <name>Cu cation</name>
        <dbReference type="ChEBI" id="CHEBI:23378"/>
        <label>A2</label>
    </ligand>
</feature>
<feature type="binding site" evidence="1">
    <location>
        <position position="223"/>
    </location>
    <ligand>
        <name>Mg(2+)</name>
        <dbReference type="ChEBI" id="CHEBI:18420"/>
        <note>ligand shared with subunit 1</note>
    </ligand>
</feature>
<feature type="binding site" evidence="1">
    <location>
        <position position="225"/>
    </location>
    <ligand>
        <name>Cu cation</name>
        <dbReference type="ChEBI" id="CHEBI:23378"/>
        <label>A1</label>
    </ligand>
</feature>
<feature type="binding site" evidence="1">
    <location>
        <position position="225"/>
    </location>
    <ligand>
        <name>Cu cation</name>
        <dbReference type="ChEBI" id="CHEBI:23378"/>
        <label>A2</label>
    </ligand>
</feature>
<feature type="binding site" evidence="1">
    <location>
        <position position="229"/>
    </location>
    <ligand>
        <name>Cu cation</name>
        <dbReference type="ChEBI" id="CHEBI:23378"/>
        <label>A2</label>
    </ligand>
</feature>
<feature type="binding site" evidence="1">
    <location>
        <position position="232"/>
    </location>
    <ligand>
        <name>Cu cation</name>
        <dbReference type="ChEBI" id="CHEBI:23378"/>
        <label>A1</label>
    </ligand>
</feature>
<feature type="sequence conflict" description="In Ref. 1; CAA49205." evidence="3" ref="1">
    <original>P</original>
    <variation>A</variation>
    <location>
        <position position="18"/>
    </location>
</feature>
<feature type="sequence conflict" description="In Ref. 1; CAA49205." evidence="3" ref="1">
    <original>A</original>
    <variation>E</variation>
    <location>
        <position position="90"/>
    </location>
</feature>
<feature type="sequence conflict" description="In Ref. 1; CAA49205." evidence="3" ref="1">
    <original>A</original>
    <variation>V</variation>
    <location>
        <position position="97"/>
    </location>
</feature>
<name>COX2_CANGA</name>
<proteinExistence type="inferred from homology"/>
<evidence type="ECO:0000250" key="1">
    <source>
        <dbReference type="UniProtKB" id="P00410"/>
    </source>
</evidence>
<evidence type="ECO:0000255" key="2"/>
<evidence type="ECO:0000305" key="3"/>
<gene>
    <name type="primary">COX2</name>
</gene>
<organism>
    <name type="scientific">Candida glabrata (strain ATCC 2001 / BCRC 20586 / JCM 3761 / NBRC 0622 / NRRL Y-65 / CBS 138)</name>
    <name type="common">Yeast</name>
    <name type="synonym">Nakaseomyces glabratus</name>
    <dbReference type="NCBI Taxonomy" id="284593"/>
    <lineage>
        <taxon>Eukaryota</taxon>
        <taxon>Fungi</taxon>
        <taxon>Dikarya</taxon>
        <taxon>Ascomycota</taxon>
        <taxon>Saccharomycotina</taxon>
        <taxon>Saccharomycetes</taxon>
        <taxon>Saccharomycetales</taxon>
        <taxon>Saccharomycetaceae</taxon>
        <taxon>Nakaseomyces</taxon>
    </lineage>
</organism>